<reference key="1">
    <citation type="journal article" date="2005" name="J. Bacteriol.">
        <title>Insights into genome plasticity and pathogenicity of the plant pathogenic Bacterium Xanthomonas campestris pv. vesicatoria revealed by the complete genome sequence.</title>
        <authorList>
            <person name="Thieme F."/>
            <person name="Koebnik R."/>
            <person name="Bekel T."/>
            <person name="Berger C."/>
            <person name="Boch J."/>
            <person name="Buettner D."/>
            <person name="Caldana C."/>
            <person name="Gaigalat L."/>
            <person name="Goesmann A."/>
            <person name="Kay S."/>
            <person name="Kirchner O."/>
            <person name="Lanz C."/>
            <person name="Linke B."/>
            <person name="McHardy A.C."/>
            <person name="Meyer F."/>
            <person name="Mittenhuber G."/>
            <person name="Nies D.H."/>
            <person name="Niesbach-Kloesgen U."/>
            <person name="Patschkowski T."/>
            <person name="Rueckert C."/>
            <person name="Rupp O."/>
            <person name="Schneiker S."/>
            <person name="Schuster S.C."/>
            <person name="Vorhoelter F.J."/>
            <person name="Weber E."/>
            <person name="Puehler A."/>
            <person name="Bonas U."/>
            <person name="Bartels D."/>
            <person name="Kaiser O."/>
        </authorList>
    </citation>
    <scope>NUCLEOTIDE SEQUENCE [LARGE SCALE GENOMIC DNA]</scope>
    <source>
        <strain>85-10</strain>
    </source>
</reference>
<protein>
    <recommendedName>
        <fullName evidence="1">Chaperone SurA</fullName>
    </recommendedName>
    <alternativeName>
        <fullName evidence="1">Peptidyl-prolyl cis-trans isomerase SurA</fullName>
        <shortName evidence="1">PPIase SurA</shortName>
        <ecNumber evidence="1">5.2.1.8</ecNumber>
    </alternativeName>
    <alternativeName>
        <fullName evidence="1">Rotamase SurA</fullName>
    </alternativeName>
</protein>
<accession>Q3BX80</accession>
<comment type="function">
    <text evidence="1">Chaperone involved in the correct folding and assembly of outer membrane proteins. Recognizes specific patterns of aromatic residues and the orientation of their side chains, which are found more frequently in integral outer membrane proteins. May act in both early periplasmic and late outer membrane-associated steps of protein maturation.</text>
</comment>
<comment type="catalytic activity">
    <reaction evidence="1">
        <text>[protein]-peptidylproline (omega=180) = [protein]-peptidylproline (omega=0)</text>
        <dbReference type="Rhea" id="RHEA:16237"/>
        <dbReference type="Rhea" id="RHEA-COMP:10747"/>
        <dbReference type="Rhea" id="RHEA-COMP:10748"/>
        <dbReference type="ChEBI" id="CHEBI:83833"/>
        <dbReference type="ChEBI" id="CHEBI:83834"/>
        <dbReference type="EC" id="5.2.1.8"/>
    </reaction>
</comment>
<comment type="subcellular location">
    <subcellularLocation>
        <location evidence="1">Periplasm</location>
    </subcellularLocation>
    <text evidence="1">Is capable of associating with the outer membrane.</text>
</comment>
<comment type="domain">
    <text evidence="1">The PPIase activity resides only in the second parvulin domain. The N-terminal region and the C-terminal tail are necessary and sufficient for the chaperone activity of SurA. The PPIase activity is dispensable for SurA to function as a chaperone. The N-terminal region and the C-terminal tail are also required for porin recognition.</text>
</comment>
<keyword id="KW-0143">Chaperone</keyword>
<keyword id="KW-0413">Isomerase</keyword>
<keyword id="KW-0574">Periplasm</keyword>
<keyword id="KW-0677">Repeat</keyword>
<keyword id="KW-0697">Rotamase</keyword>
<keyword id="KW-0732">Signal</keyword>
<dbReference type="EC" id="5.2.1.8" evidence="1"/>
<dbReference type="EMBL" id="AM039952">
    <property type="protein sequence ID" value="CAJ22533.1"/>
    <property type="molecule type" value="Genomic_DNA"/>
</dbReference>
<dbReference type="RefSeq" id="WP_008576397.1">
    <property type="nucleotide sequence ID" value="NZ_CP017190.1"/>
</dbReference>
<dbReference type="SMR" id="Q3BX80"/>
<dbReference type="STRING" id="456327.BJD11_18280"/>
<dbReference type="KEGG" id="xcv:XCV0902"/>
<dbReference type="eggNOG" id="COG0760">
    <property type="taxonomic scope" value="Bacteria"/>
</dbReference>
<dbReference type="HOGENOM" id="CLU_034646_11_0_6"/>
<dbReference type="Proteomes" id="UP000007069">
    <property type="component" value="Chromosome"/>
</dbReference>
<dbReference type="GO" id="GO:0030288">
    <property type="term" value="C:outer membrane-bounded periplasmic space"/>
    <property type="evidence" value="ECO:0007669"/>
    <property type="project" value="InterPro"/>
</dbReference>
<dbReference type="GO" id="GO:0042277">
    <property type="term" value="F:peptide binding"/>
    <property type="evidence" value="ECO:0007669"/>
    <property type="project" value="InterPro"/>
</dbReference>
<dbReference type="GO" id="GO:0003755">
    <property type="term" value="F:peptidyl-prolyl cis-trans isomerase activity"/>
    <property type="evidence" value="ECO:0007669"/>
    <property type="project" value="UniProtKB-UniRule"/>
</dbReference>
<dbReference type="GO" id="GO:0051082">
    <property type="term" value="F:unfolded protein binding"/>
    <property type="evidence" value="ECO:0007669"/>
    <property type="project" value="UniProtKB-UniRule"/>
</dbReference>
<dbReference type="GO" id="GO:0043165">
    <property type="term" value="P:Gram-negative-bacterium-type cell outer membrane assembly"/>
    <property type="evidence" value="ECO:0007669"/>
    <property type="project" value="InterPro"/>
</dbReference>
<dbReference type="GO" id="GO:0006457">
    <property type="term" value="P:protein folding"/>
    <property type="evidence" value="ECO:0007669"/>
    <property type="project" value="UniProtKB-UniRule"/>
</dbReference>
<dbReference type="GO" id="GO:0050821">
    <property type="term" value="P:protein stabilization"/>
    <property type="evidence" value="ECO:0007669"/>
    <property type="project" value="InterPro"/>
</dbReference>
<dbReference type="Gene3D" id="3.10.50.40">
    <property type="match status" value="2"/>
</dbReference>
<dbReference type="Gene3D" id="1.10.4030.10">
    <property type="entry name" value="Porin chaperone SurA, peptide-binding domain"/>
    <property type="match status" value="1"/>
</dbReference>
<dbReference type="HAMAP" id="MF_01183">
    <property type="entry name" value="Chaperone_SurA"/>
    <property type="match status" value="1"/>
</dbReference>
<dbReference type="InterPro" id="IPR050280">
    <property type="entry name" value="OMP_Chaperone_SurA"/>
</dbReference>
<dbReference type="InterPro" id="IPR046357">
    <property type="entry name" value="PPIase_dom_sf"/>
</dbReference>
<dbReference type="InterPro" id="IPR000297">
    <property type="entry name" value="PPIase_PpiC"/>
</dbReference>
<dbReference type="InterPro" id="IPR023034">
    <property type="entry name" value="PPIase_SurA"/>
</dbReference>
<dbReference type="InterPro" id="IPR015391">
    <property type="entry name" value="SurA_N"/>
</dbReference>
<dbReference type="InterPro" id="IPR027304">
    <property type="entry name" value="Trigger_fact/SurA_dom_sf"/>
</dbReference>
<dbReference type="PANTHER" id="PTHR47637">
    <property type="entry name" value="CHAPERONE SURA"/>
    <property type="match status" value="1"/>
</dbReference>
<dbReference type="PANTHER" id="PTHR47637:SF1">
    <property type="entry name" value="CHAPERONE SURA"/>
    <property type="match status" value="1"/>
</dbReference>
<dbReference type="Pfam" id="PF00639">
    <property type="entry name" value="Rotamase"/>
    <property type="match status" value="1"/>
</dbReference>
<dbReference type="Pfam" id="PF13616">
    <property type="entry name" value="Rotamase_3"/>
    <property type="match status" value="1"/>
</dbReference>
<dbReference type="Pfam" id="PF09312">
    <property type="entry name" value="SurA_N"/>
    <property type="match status" value="1"/>
</dbReference>
<dbReference type="SUPFAM" id="SSF54534">
    <property type="entry name" value="FKBP-like"/>
    <property type="match status" value="2"/>
</dbReference>
<dbReference type="SUPFAM" id="SSF109998">
    <property type="entry name" value="Triger factor/SurA peptide-binding domain-like"/>
    <property type="match status" value="1"/>
</dbReference>
<dbReference type="PROSITE" id="PS50198">
    <property type="entry name" value="PPIC_PPIASE_2"/>
    <property type="match status" value="2"/>
</dbReference>
<name>SURA_XANE5</name>
<evidence type="ECO:0000255" key="1">
    <source>
        <dbReference type="HAMAP-Rule" id="MF_01183"/>
    </source>
</evidence>
<evidence type="ECO:0000256" key="2">
    <source>
        <dbReference type="SAM" id="MobiDB-lite"/>
    </source>
</evidence>
<sequence>MTKPFSVVLASLLAITSTVSPLASAQQSQPLDRIAAIVDEDVVLQSELDRAVRNVKSQYAGRENQLPPDDVLQRQVLERLVLVKLQVSRADGNGIRVSDEELNRAIASIAQQNGTTVDGLRQKLAADGMGYADFRASVRDEIIVQRLRQSFAQSRISVSEGEVDTALAQQAATGSQYHLAHILIGLPEGATAEQIATGQKKVDGVKALIDKGELDFSAAAVRYSDSPNALEGGDLGWRSLDEIPNAFAQLIRDMQPGQVAGPLRGPSGFQLLKLVEMRDANAGGEKKMVTEYHARHILVRIGENQTEAQAKAKIDTIRARIVGGADFQATAKESSEDTNSRGQGGDLGWFPADAFGPDFGKQVESLTDGAVSEPFRTQAGWHIVQRVGSRQTDVSAENQRAQVRETIGRRKLEEEYNRYLQELRGEAYVSYRTGDRADDNATAAPAKSADPAAPSPPPAKPTR</sequence>
<feature type="signal peptide" evidence="1">
    <location>
        <begin position="1"/>
        <end position="25"/>
    </location>
</feature>
<feature type="chain" id="PRO_5000075438" description="Chaperone SurA">
    <location>
        <begin position="26"/>
        <end position="463"/>
    </location>
</feature>
<feature type="domain" description="PpiC 1" evidence="1">
    <location>
        <begin position="174"/>
        <end position="276"/>
    </location>
</feature>
<feature type="domain" description="PpiC 2" evidence="1">
    <location>
        <begin position="289"/>
        <end position="388"/>
    </location>
</feature>
<feature type="region of interest" description="Disordered" evidence="2">
    <location>
        <begin position="328"/>
        <end position="348"/>
    </location>
</feature>
<feature type="region of interest" description="Disordered" evidence="2">
    <location>
        <begin position="432"/>
        <end position="463"/>
    </location>
</feature>
<feature type="compositionally biased region" description="Low complexity" evidence="2">
    <location>
        <begin position="440"/>
        <end position="452"/>
    </location>
</feature>
<feature type="compositionally biased region" description="Pro residues" evidence="2">
    <location>
        <begin position="453"/>
        <end position="463"/>
    </location>
</feature>
<organism>
    <name type="scientific">Xanthomonas euvesicatoria pv. vesicatoria (strain 85-10)</name>
    <name type="common">Xanthomonas campestris pv. vesicatoria</name>
    <dbReference type="NCBI Taxonomy" id="316273"/>
    <lineage>
        <taxon>Bacteria</taxon>
        <taxon>Pseudomonadati</taxon>
        <taxon>Pseudomonadota</taxon>
        <taxon>Gammaproteobacteria</taxon>
        <taxon>Lysobacterales</taxon>
        <taxon>Lysobacteraceae</taxon>
        <taxon>Xanthomonas</taxon>
    </lineage>
</organism>
<proteinExistence type="inferred from homology"/>
<gene>
    <name evidence="1" type="primary">surA</name>
    <name type="ordered locus">XCV0902</name>
</gene>